<accession>A5FRW5</accession>
<proteinExistence type="inferred from homology"/>
<protein>
    <recommendedName>
        <fullName evidence="1">Adenylate kinase</fullName>
        <shortName evidence="1">AK</shortName>
        <ecNumber evidence="1">2.7.4.3</ecNumber>
    </recommendedName>
    <alternativeName>
        <fullName evidence="1">ATP-AMP transphosphorylase</fullName>
    </alternativeName>
    <alternativeName>
        <fullName evidence="1">ATP:AMP phosphotransferase</fullName>
    </alternativeName>
    <alternativeName>
        <fullName evidence="1">Adenylate monophosphate kinase</fullName>
    </alternativeName>
</protein>
<evidence type="ECO:0000255" key="1">
    <source>
        <dbReference type="HAMAP-Rule" id="MF_00235"/>
    </source>
</evidence>
<sequence length="216" mass="23804">MYNVIFLGAPGSGKGTQGEVVAKELKLAHMATGDLFRKAIECGDELGDTVKSYMERGELVPDEITISVVLKHLAGLKDVTGIILDGFPRSLRQAEALDEALVQQGQGIGRVIYINVPEDELVRRLSGRWVCRSCQSPYQSGCAEVTKGKCSRCQGELYQRPDDTPETVKERLKVYFSKTAPLIEYYRSKGKLSEIDGMAEISEVTKRIISAIKCGK</sequence>
<feature type="chain" id="PRO_1000078272" description="Adenylate kinase">
    <location>
        <begin position="1"/>
        <end position="216"/>
    </location>
</feature>
<feature type="region of interest" description="NMP" evidence="1">
    <location>
        <begin position="31"/>
        <end position="60"/>
    </location>
</feature>
<feature type="region of interest" description="LID" evidence="1">
    <location>
        <begin position="127"/>
        <end position="163"/>
    </location>
</feature>
<feature type="binding site" evidence="1">
    <location>
        <begin position="11"/>
        <end position="16"/>
    </location>
    <ligand>
        <name>ATP</name>
        <dbReference type="ChEBI" id="CHEBI:30616"/>
    </ligand>
</feature>
<feature type="binding site" evidence="1">
    <location>
        <position position="32"/>
    </location>
    <ligand>
        <name>AMP</name>
        <dbReference type="ChEBI" id="CHEBI:456215"/>
    </ligand>
</feature>
<feature type="binding site" evidence="1">
    <location>
        <position position="37"/>
    </location>
    <ligand>
        <name>AMP</name>
        <dbReference type="ChEBI" id="CHEBI:456215"/>
    </ligand>
</feature>
<feature type="binding site" evidence="1">
    <location>
        <begin position="58"/>
        <end position="60"/>
    </location>
    <ligand>
        <name>AMP</name>
        <dbReference type="ChEBI" id="CHEBI:456215"/>
    </ligand>
</feature>
<feature type="binding site" evidence="1">
    <location>
        <begin position="86"/>
        <end position="89"/>
    </location>
    <ligand>
        <name>AMP</name>
        <dbReference type="ChEBI" id="CHEBI:456215"/>
    </ligand>
</feature>
<feature type="binding site" evidence="1">
    <location>
        <position position="93"/>
    </location>
    <ligand>
        <name>AMP</name>
        <dbReference type="ChEBI" id="CHEBI:456215"/>
    </ligand>
</feature>
<feature type="binding site" evidence="1">
    <location>
        <position position="128"/>
    </location>
    <ligand>
        <name>ATP</name>
        <dbReference type="ChEBI" id="CHEBI:30616"/>
    </ligand>
</feature>
<feature type="binding site" evidence="1">
    <location>
        <position position="131"/>
    </location>
    <ligand>
        <name>Zn(2+)</name>
        <dbReference type="ChEBI" id="CHEBI:29105"/>
        <note>structural</note>
    </ligand>
</feature>
<feature type="binding site" evidence="1">
    <location>
        <position position="134"/>
    </location>
    <ligand>
        <name>Zn(2+)</name>
        <dbReference type="ChEBI" id="CHEBI:29105"/>
        <note>structural</note>
    </ligand>
</feature>
<feature type="binding site" evidence="1">
    <location>
        <position position="150"/>
    </location>
    <ligand>
        <name>Zn(2+)</name>
        <dbReference type="ChEBI" id="CHEBI:29105"/>
        <note>structural</note>
    </ligand>
</feature>
<feature type="binding site" evidence="1">
    <location>
        <position position="153"/>
    </location>
    <ligand>
        <name>Zn(2+)</name>
        <dbReference type="ChEBI" id="CHEBI:29105"/>
        <note>structural</note>
    </ligand>
</feature>
<feature type="binding site" evidence="1">
    <location>
        <position position="160"/>
    </location>
    <ligand>
        <name>AMP</name>
        <dbReference type="ChEBI" id="CHEBI:456215"/>
    </ligand>
</feature>
<feature type="binding site" evidence="1">
    <location>
        <position position="171"/>
    </location>
    <ligand>
        <name>AMP</name>
        <dbReference type="ChEBI" id="CHEBI:456215"/>
    </ligand>
</feature>
<feature type="binding site" evidence="1">
    <location>
        <position position="199"/>
    </location>
    <ligand>
        <name>ATP</name>
        <dbReference type="ChEBI" id="CHEBI:30616"/>
    </ligand>
</feature>
<keyword id="KW-0067">ATP-binding</keyword>
<keyword id="KW-0963">Cytoplasm</keyword>
<keyword id="KW-0418">Kinase</keyword>
<keyword id="KW-0479">Metal-binding</keyword>
<keyword id="KW-0545">Nucleotide biosynthesis</keyword>
<keyword id="KW-0547">Nucleotide-binding</keyword>
<keyword id="KW-0808">Transferase</keyword>
<keyword id="KW-0862">Zinc</keyword>
<gene>
    <name evidence="1" type="primary">adk</name>
    <name type="ordered locus">DehaBAV1_0472</name>
</gene>
<organism>
    <name type="scientific">Dehalococcoides mccartyi (strain ATCC BAA-2100 / JCM 16839 / KCTC 5957 / BAV1)</name>
    <dbReference type="NCBI Taxonomy" id="216389"/>
    <lineage>
        <taxon>Bacteria</taxon>
        <taxon>Bacillati</taxon>
        <taxon>Chloroflexota</taxon>
        <taxon>Dehalococcoidia</taxon>
        <taxon>Dehalococcoidales</taxon>
        <taxon>Dehalococcoidaceae</taxon>
        <taxon>Dehalococcoides</taxon>
    </lineage>
</organism>
<name>KAD_DEHMB</name>
<comment type="function">
    <text evidence="1">Catalyzes the reversible transfer of the terminal phosphate group between ATP and AMP. Plays an important role in cellular energy homeostasis and in adenine nucleotide metabolism.</text>
</comment>
<comment type="catalytic activity">
    <reaction evidence="1">
        <text>AMP + ATP = 2 ADP</text>
        <dbReference type="Rhea" id="RHEA:12973"/>
        <dbReference type="ChEBI" id="CHEBI:30616"/>
        <dbReference type="ChEBI" id="CHEBI:456215"/>
        <dbReference type="ChEBI" id="CHEBI:456216"/>
        <dbReference type="EC" id="2.7.4.3"/>
    </reaction>
</comment>
<comment type="pathway">
    <text evidence="1">Purine metabolism; AMP biosynthesis via salvage pathway; AMP from ADP: step 1/1.</text>
</comment>
<comment type="subunit">
    <text evidence="1">Monomer.</text>
</comment>
<comment type="subcellular location">
    <subcellularLocation>
        <location evidence="1">Cytoplasm</location>
    </subcellularLocation>
</comment>
<comment type="domain">
    <text evidence="1">Consists of three domains, a large central CORE domain and two small peripheral domains, NMPbind and LID, which undergo movements during catalysis. The LID domain closes over the site of phosphoryl transfer upon ATP binding. Assembling and dissambling the active center during each catalytic cycle provides an effective means to prevent ATP hydrolysis. Some bacteria have evolved a zinc-coordinating structure that stabilizes the LID domain.</text>
</comment>
<comment type="similarity">
    <text evidence="1">Belongs to the adenylate kinase family.</text>
</comment>
<reference key="1">
    <citation type="submission" date="2007-05" db="EMBL/GenBank/DDBJ databases">
        <title>Complete sequence of Dehalococcoides sp. BAV1.</title>
        <authorList>
            <consortium name="US DOE Joint Genome Institute"/>
            <person name="Copeland A."/>
            <person name="Lucas S."/>
            <person name="Lapidus A."/>
            <person name="Barry K."/>
            <person name="Detter J.C."/>
            <person name="Glavina del Rio T."/>
            <person name="Hammon N."/>
            <person name="Israni S."/>
            <person name="Pitluck S."/>
            <person name="Lowry S."/>
            <person name="Clum A."/>
            <person name="Schmutz J."/>
            <person name="Larimer F."/>
            <person name="Land M."/>
            <person name="Hauser L."/>
            <person name="Kyrpides N."/>
            <person name="Kim E."/>
            <person name="Ritalahti K.M."/>
            <person name="Loeffler F."/>
            <person name="Richardson P."/>
        </authorList>
    </citation>
    <scope>NUCLEOTIDE SEQUENCE [LARGE SCALE GENOMIC DNA]</scope>
    <source>
        <strain>ATCC BAA-2100 / JCM 16839 / KCTC 5957 / BAV1</strain>
    </source>
</reference>
<dbReference type="EC" id="2.7.4.3" evidence="1"/>
<dbReference type="EMBL" id="CP000688">
    <property type="protein sequence ID" value="ABQ17057.1"/>
    <property type="molecule type" value="Genomic_DNA"/>
</dbReference>
<dbReference type="SMR" id="A5FRW5"/>
<dbReference type="KEGG" id="deb:DehaBAV1_0472"/>
<dbReference type="PATRIC" id="fig|216389.18.peg.515"/>
<dbReference type="HOGENOM" id="CLU_032354_1_2_0"/>
<dbReference type="UniPathway" id="UPA00588">
    <property type="reaction ID" value="UER00649"/>
</dbReference>
<dbReference type="GO" id="GO:0005737">
    <property type="term" value="C:cytoplasm"/>
    <property type="evidence" value="ECO:0007669"/>
    <property type="project" value="UniProtKB-SubCell"/>
</dbReference>
<dbReference type="GO" id="GO:0004017">
    <property type="term" value="F:adenylate kinase activity"/>
    <property type="evidence" value="ECO:0007669"/>
    <property type="project" value="UniProtKB-UniRule"/>
</dbReference>
<dbReference type="GO" id="GO:0005524">
    <property type="term" value="F:ATP binding"/>
    <property type="evidence" value="ECO:0007669"/>
    <property type="project" value="UniProtKB-UniRule"/>
</dbReference>
<dbReference type="GO" id="GO:0046872">
    <property type="term" value="F:metal ion binding"/>
    <property type="evidence" value="ECO:0007669"/>
    <property type="project" value="UniProtKB-KW"/>
</dbReference>
<dbReference type="GO" id="GO:0044209">
    <property type="term" value="P:AMP salvage"/>
    <property type="evidence" value="ECO:0007669"/>
    <property type="project" value="UniProtKB-UniRule"/>
</dbReference>
<dbReference type="CDD" id="cd01428">
    <property type="entry name" value="ADK"/>
    <property type="match status" value="1"/>
</dbReference>
<dbReference type="FunFam" id="3.40.50.300:FF:000106">
    <property type="entry name" value="Adenylate kinase mitochondrial"/>
    <property type="match status" value="1"/>
</dbReference>
<dbReference type="Gene3D" id="3.40.50.300">
    <property type="entry name" value="P-loop containing nucleotide triphosphate hydrolases"/>
    <property type="match status" value="1"/>
</dbReference>
<dbReference type="HAMAP" id="MF_00235">
    <property type="entry name" value="Adenylate_kinase_Adk"/>
    <property type="match status" value="1"/>
</dbReference>
<dbReference type="InterPro" id="IPR006259">
    <property type="entry name" value="Adenyl_kin_sub"/>
</dbReference>
<dbReference type="InterPro" id="IPR000850">
    <property type="entry name" value="Adenylat/UMP-CMP_kin"/>
</dbReference>
<dbReference type="InterPro" id="IPR033690">
    <property type="entry name" value="Adenylat_kinase_CS"/>
</dbReference>
<dbReference type="InterPro" id="IPR027417">
    <property type="entry name" value="P-loop_NTPase"/>
</dbReference>
<dbReference type="NCBIfam" id="TIGR01351">
    <property type="entry name" value="adk"/>
    <property type="match status" value="1"/>
</dbReference>
<dbReference type="NCBIfam" id="NF001380">
    <property type="entry name" value="PRK00279.1-2"/>
    <property type="match status" value="1"/>
</dbReference>
<dbReference type="NCBIfam" id="NF001381">
    <property type="entry name" value="PRK00279.1-3"/>
    <property type="match status" value="1"/>
</dbReference>
<dbReference type="NCBIfam" id="NF011100">
    <property type="entry name" value="PRK14527.1"/>
    <property type="match status" value="1"/>
</dbReference>
<dbReference type="PANTHER" id="PTHR23359">
    <property type="entry name" value="NUCLEOTIDE KINASE"/>
    <property type="match status" value="1"/>
</dbReference>
<dbReference type="Pfam" id="PF00406">
    <property type="entry name" value="ADK"/>
    <property type="match status" value="1"/>
</dbReference>
<dbReference type="PRINTS" id="PR00094">
    <property type="entry name" value="ADENYLTKNASE"/>
</dbReference>
<dbReference type="SUPFAM" id="SSF52540">
    <property type="entry name" value="P-loop containing nucleoside triphosphate hydrolases"/>
    <property type="match status" value="1"/>
</dbReference>
<dbReference type="PROSITE" id="PS00113">
    <property type="entry name" value="ADENYLATE_KINASE"/>
    <property type="match status" value="1"/>
</dbReference>